<protein>
    <recommendedName>
        <fullName>Transcription elongation factor SPT4</fullName>
    </recommendedName>
    <alternativeName>
        <fullName>DRB sensitivity-inducing factor small subunit</fullName>
        <shortName>DSIF small subunit</shortName>
    </alternativeName>
</protein>
<organism>
    <name type="scientific">Caenorhabditis elegans</name>
    <dbReference type="NCBI Taxonomy" id="6239"/>
    <lineage>
        <taxon>Eukaryota</taxon>
        <taxon>Metazoa</taxon>
        <taxon>Ecdysozoa</taxon>
        <taxon>Nematoda</taxon>
        <taxon>Chromadorea</taxon>
        <taxon>Rhabditida</taxon>
        <taxon>Rhabditina</taxon>
        <taxon>Rhabditomorpha</taxon>
        <taxon>Rhabditoidea</taxon>
        <taxon>Rhabditidae</taxon>
        <taxon>Peloderinae</taxon>
        <taxon>Caenorhabditis</taxon>
    </lineage>
</organism>
<comment type="function">
    <text evidence="3">May function as a component of the DRB sensitivity-inducing factor complex (DSIF complex), which regulates transcription elongation by RNA polymerase II. DSIF may enhance transcriptional pausing at sites proximal to the promoter, which may in turn facilitate the assembly of an elongation competent RNA polymerase II complex.</text>
</comment>
<comment type="subunit">
    <text evidence="1">Interacts with spt-5 to form DSIF. DSIF interacts with RNA polymerase II and with the positive transcription elongation factor b complex (P-TEFb complex), which is composed of cdk-9 and cyclin-T (cit-1.1 or cit-1.2) (By similarity).</text>
</comment>
<comment type="subcellular location">
    <subcellularLocation>
        <location evidence="1">Nucleus</location>
    </subcellularLocation>
</comment>
<comment type="similarity">
    <text evidence="4">Belongs to the SPT4 family.</text>
</comment>
<gene>
    <name type="primary">spt-4</name>
    <name type="ORF">F54C4.2</name>
</gene>
<evidence type="ECO:0000250" key="1"/>
<evidence type="ECO:0000255" key="2"/>
<evidence type="ECO:0000269" key="3">
    <source>
    </source>
</evidence>
<evidence type="ECO:0000305" key="4"/>
<keyword id="KW-0010">Activator</keyword>
<keyword id="KW-0479">Metal-binding</keyword>
<keyword id="KW-0539">Nucleus</keyword>
<keyword id="KW-1185">Reference proteome</keyword>
<keyword id="KW-0678">Repressor</keyword>
<keyword id="KW-0804">Transcription</keyword>
<keyword id="KW-0805">Transcription regulation</keyword>
<keyword id="KW-0862">Zinc</keyword>
<keyword id="KW-0863">Zinc-finger</keyword>
<sequence>MSASVPADLRNLRACLLCSLVKSVESFQKEGCENCEDVLHLKGDEEKVYDCTSANYDGMIAAMSNNESWVCKWQKMQRKVKGMYAISVSGVLPNNIVSELKSLGVRYKPNQRDYSTQFKK</sequence>
<name>SPT4H_CAEEL</name>
<proteinExistence type="inferred from homology"/>
<dbReference type="EMBL" id="FO080712">
    <property type="protein sequence ID" value="CCD66087.1"/>
    <property type="molecule type" value="Genomic_DNA"/>
</dbReference>
<dbReference type="PIR" id="T33605">
    <property type="entry name" value="T33605"/>
</dbReference>
<dbReference type="RefSeq" id="NP_497135.1">
    <property type="nucleotide sequence ID" value="NM_064734.6"/>
</dbReference>
<dbReference type="SMR" id="Q9TZ93"/>
<dbReference type="BioGRID" id="40448">
    <property type="interactions" value="7"/>
</dbReference>
<dbReference type="DIP" id="DIP-25841N"/>
<dbReference type="FunCoup" id="Q9TZ93">
    <property type="interactions" value="1962"/>
</dbReference>
<dbReference type="STRING" id="6239.F54C4.2.1"/>
<dbReference type="PaxDb" id="6239-F54C4.2"/>
<dbReference type="PeptideAtlas" id="Q9TZ93"/>
<dbReference type="EnsemblMetazoa" id="F54C4.2.1">
    <property type="protein sequence ID" value="F54C4.2.1"/>
    <property type="gene ID" value="WBGene00005014"/>
</dbReference>
<dbReference type="GeneID" id="175172"/>
<dbReference type="KEGG" id="cel:CELE_F54C4.2"/>
<dbReference type="UCSC" id="F54C4.2">
    <property type="organism name" value="c. elegans"/>
</dbReference>
<dbReference type="AGR" id="WB:WBGene00005014"/>
<dbReference type="CTD" id="175172"/>
<dbReference type="WormBase" id="F54C4.2">
    <property type="protein sequence ID" value="CE19891"/>
    <property type="gene ID" value="WBGene00005014"/>
    <property type="gene designation" value="spt-4"/>
</dbReference>
<dbReference type="eggNOG" id="KOG3490">
    <property type="taxonomic scope" value="Eukaryota"/>
</dbReference>
<dbReference type="GeneTree" id="ENSGT00390000018559"/>
<dbReference type="HOGENOM" id="CLU_138052_3_0_1"/>
<dbReference type="InParanoid" id="Q9TZ93"/>
<dbReference type="OMA" id="FDGMIAV"/>
<dbReference type="OrthoDB" id="248751at2759"/>
<dbReference type="PhylomeDB" id="Q9TZ93"/>
<dbReference type="Reactome" id="R-CEL-112382">
    <property type="pathway name" value="Formation of RNA Pol II elongation complex"/>
</dbReference>
<dbReference type="Reactome" id="R-CEL-113418">
    <property type="pathway name" value="Formation of the Early Elongation Complex"/>
</dbReference>
<dbReference type="Reactome" id="R-CEL-674695">
    <property type="pathway name" value="RNA Polymerase II Pre-transcription Events"/>
</dbReference>
<dbReference type="Reactome" id="R-CEL-6796648">
    <property type="pathway name" value="TP53 Regulates Transcription of DNA Repair Genes"/>
</dbReference>
<dbReference type="Reactome" id="R-CEL-75955">
    <property type="pathway name" value="RNA Polymerase II Transcription Elongation"/>
</dbReference>
<dbReference type="PRO" id="PR:Q9TZ93"/>
<dbReference type="Proteomes" id="UP000001940">
    <property type="component" value="Chromosome III"/>
</dbReference>
<dbReference type="Bgee" id="WBGene00005014">
    <property type="expression patterns" value="Expressed in embryo and 4 other cell types or tissues"/>
</dbReference>
<dbReference type="GO" id="GO:0032044">
    <property type="term" value="C:DSIF complex"/>
    <property type="evidence" value="ECO:0000318"/>
    <property type="project" value="GO_Central"/>
</dbReference>
<dbReference type="GO" id="GO:0000993">
    <property type="term" value="F:RNA polymerase II complex binding"/>
    <property type="evidence" value="ECO:0000318"/>
    <property type="project" value="GO_Central"/>
</dbReference>
<dbReference type="GO" id="GO:0008270">
    <property type="term" value="F:zinc ion binding"/>
    <property type="evidence" value="ECO:0007669"/>
    <property type="project" value="UniProtKB-KW"/>
</dbReference>
<dbReference type="GO" id="GO:0006355">
    <property type="term" value="P:regulation of DNA-templated transcription"/>
    <property type="evidence" value="ECO:0007669"/>
    <property type="project" value="InterPro"/>
</dbReference>
<dbReference type="GO" id="GO:0006368">
    <property type="term" value="P:transcription elongation by RNA polymerase II"/>
    <property type="evidence" value="ECO:0000318"/>
    <property type="project" value="GO_Central"/>
</dbReference>
<dbReference type="GO" id="GO:0140673">
    <property type="term" value="P:transcription elongation-coupled chromatin remodeling"/>
    <property type="evidence" value="ECO:0007669"/>
    <property type="project" value="InterPro"/>
</dbReference>
<dbReference type="CDD" id="cd07973">
    <property type="entry name" value="Spt4"/>
    <property type="match status" value="1"/>
</dbReference>
<dbReference type="FunFam" id="3.30.40.210:FF:000001">
    <property type="entry name" value="Transcription elongation factor SPT4"/>
    <property type="match status" value="1"/>
</dbReference>
<dbReference type="Gene3D" id="3.30.40.210">
    <property type="match status" value="1"/>
</dbReference>
<dbReference type="InterPro" id="IPR029040">
    <property type="entry name" value="RPABC4/Spt4"/>
</dbReference>
<dbReference type="InterPro" id="IPR009287">
    <property type="entry name" value="Spt4"/>
</dbReference>
<dbReference type="InterPro" id="IPR022800">
    <property type="entry name" value="Spt4/RpoE2_Znf"/>
</dbReference>
<dbReference type="InterPro" id="IPR038510">
    <property type="entry name" value="Spt4_sf"/>
</dbReference>
<dbReference type="PANTHER" id="PTHR12882">
    <property type="entry name" value="SUPPRESSOR OF TY 4"/>
    <property type="match status" value="1"/>
</dbReference>
<dbReference type="PANTHER" id="PTHR12882:SF1">
    <property type="entry name" value="TRANSCRIPTION ELONGATION FACTOR SPT4"/>
    <property type="match status" value="1"/>
</dbReference>
<dbReference type="Pfam" id="PF06093">
    <property type="entry name" value="Spt4"/>
    <property type="match status" value="1"/>
</dbReference>
<dbReference type="PIRSF" id="PIRSF025023">
    <property type="entry name" value="Spt4"/>
    <property type="match status" value="1"/>
</dbReference>
<dbReference type="SMART" id="SM01389">
    <property type="entry name" value="Spt4"/>
    <property type="match status" value="1"/>
</dbReference>
<dbReference type="SUPFAM" id="SSF63393">
    <property type="entry name" value="RNA polymerase subunits"/>
    <property type="match status" value="1"/>
</dbReference>
<feature type="chain" id="PRO_0000210334" description="Transcription elongation factor SPT4">
    <location>
        <begin position="1"/>
        <end position="120"/>
    </location>
</feature>
<feature type="zinc finger region" description="C4-type" evidence="2">
    <location>
        <begin position="15"/>
        <end position="35"/>
    </location>
</feature>
<feature type="region of interest" description="Interaction with spt-5" evidence="1">
    <location>
        <begin position="1"/>
        <end position="39"/>
    </location>
</feature>
<reference key="1">
    <citation type="journal article" date="1998" name="Science">
        <title>Genome sequence of the nematode C. elegans: a platform for investigating biology.</title>
        <authorList>
            <consortium name="The C. elegans sequencing consortium"/>
        </authorList>
    </citation>
    <scope>NUCLEOTIDE SEQUENCE [LARGE SCALE GENOMIC DNA]</scope>
    <source>
        <strain>Bristol N2</strain>
    </source>
</reference>
<reference key="2">
    <citation type="journal article" date="2002" name="Genes Dev.">
        <title>CDK-9/cyclin T (P-TEFb) is required in two postinitiation pathways for transcription in the C. elegans embryo.</title>
        <authorList>
            <person name="Shim E.Y."/>
            <person name="Walker A.K."/>
            <person name="Shi Y."/>
            <person name="Blackwell T.K."/>
        </authorList>
    </citation>
    <scope>FUNCTION</scope>
</reference>
<accession>Q9TZ93</accession>